<comment type="function">
    <text evidence="1">Involved in the gluconeogenesis. Catalyzes the conversion of oxaloacetate (OAA) to phosphoenolpyruvate (PEP) through direct phosphoryl transfer between the nucleoside triphosphate and OAA.</text>
</comment>
<comment type="catalytic activity">
    <reaction evidence="1">
        <text>oxaloacetate + ATP = phosphoenolpyruvate + ADP + CO2</text>
        <dbReference type="Rhea" id="RHEA:18617"/>
        <dbReference type="ChEBI" id="CHEBI:16452"/>
        <dbReference type="ChEBI" id="CHEBI:16526"/>
        <dbReference type="ChEBI" id="CHEBI:30616"/>
        <dbReference type="ChEBI" id="CHEBI:58702"/>
        <dbReference type="ChEBI" id="CHEBI:456216"/>
        <dbReference type="EC" id="4.1.1.49"/>
    </reaction>
</comment>
<comment type="cofactor">
    <cofactor evidence="1">
        <name>Mn(2+)</name>
        <dbReference type="ChEBI" id="CHEBI:29035"/>
    </cofactor>
    <text evidence="1">Binds 1 Mn(2+) ion per subunit.</text>
</comment>
<comment type="pathway">
    <text evidence="1">Carbohydrate biosynthesis; gluconeogenesis.</text>
</comment>
<comment type="subunit">
    <text evidence="1">Monomer.</text>
</comment>
<comment type="subcellular location">
    <subcellularLocation>
        <location evidence="1">Cytoplasm</location>
    </subcellularLocation>
</comment>
<comment type="similarity">
    <text evidence="1">Belongs to the phosphoenolpyruvate carboxykinase (ATP) family.</text>
</comment>
<gene>
    <name evidence="1" type="primary">pckA</name>
    <name type="ordered locus">SF3422</name>
    <name type="ordered locus">S4341</name>
</gene>
<keyword id="KW-0007">Acetylation</keyword>
<keyword id="KW-0067">ATP-binding</keyword>
<keyword id="KW-0963">Cytoplasm</keyword>
<keyword id="KW-0210">Decarboxylase</keyword>
<keyword id="KW-0312">Gluconeogenesis</keyword>
<keyword id="KW-0456">Lyase</keyword>
<keyword id="KW-0464">Manganese</keyword>
<keyword id="KW-0479">Metal-binding</keyword>
<keyword id="KW-0547">Nucleotide-binding</keyword>
<keyword id="KW-1185">Reference proteome</keyword>
<proteinExistence type="inferred from homology"/>
<evidence type="ECO:0000255" key="1">
    <source>
        <dbReference type="HAMAP-Rule" id="MF_00453"/>
    </source>
</evidence>
<evidence type="ECO:0000305" key="2"/>
<sequence length="540" mass="59639">MRVNNGLPPQELEAYGISNVHDIVYNPSYDLLYQEELDPSLTGYERGVLTNLGAVAVDTGIFTGRSPKDKYIVRDDTTRDTFWWADKGKGKNDNKPLSPETWQHLKGLVTRQLSGKRLFVVDAFCGANPDTRLSVRFITEVAWQAHFVKNMFIRPSDEELAGFKPDFIVMNGAKCTNPQWKEQGLNSENFVAFNLTERMQLIGGTWYGGEMKKGMFSMMNYLLPLKGIASMHCSANVGEKGDVAVFFGLSGTGKTTLSTDPKRRLIGDDEHGWDDDGVFNFEGGCYAKTIKLSKEAEPEIYNAIRRDALLENVTVREDGTIDFDDGSKTENTRVSYPIYHIDNIVKPVSKAGHATKVIFLTADAFGVLPPVSRLTADQTQYHFLSGFTAKLAGTERGITEPTPTFSACFGAAFLSLHPTQYAEVLVKRMQAAGAQAYLVNTGWNGTGKRISIKDTRAIIDAILNGSLDNAETFTLPMFNLAIPTELPGVDTKILDPRNTYASPEQWQEKAETLAKLFIDNFDKYTDTPAGAALVAAGPKL</sequence>
<dbReference type="EC" id="4.1.1.49" evidence="1"/>
<dbReference type="EMBL" id="AE005674">
    <property type="protein sequence ID" value="AAN44883.2"/>
    <property type="molecule type" value="Genomic_DNA"/>
</dbReference>
<dbReference type="EMBL" id="AE014073">
    <property type="protein sequence ID" value="AAP19296.1"/>
    <property type="molecule type" value="Genomic_DNA"/>
</dbReference>
<dbReference type="RefSeq" id="NP_709176.2">
    <property type="nucleotide sequence ID" value="NC_004337.2"/>
</dbReference>
<dbReference type="RefSeq" id="WP_011069538.1">
    <property type="nucleotide sequence ID" value="NZ_CP123365.1"/>
</dbReference>
<dbReference type="SMR" id="Q83J96"/>
<dbReference type="STRING" id="198214.SF3422"/>
<dbReference type="PaxDb" id="198214-SF3422"/>
<dbReference type="GeneID" id="1026485"/>
<dbReference type="KEGG" id="sfl:SF3422"/>
<dbReference type="KEGG" id="sfx:S4341"/>
<dbReference type="PATRIC" id="fig|198214.7.peg.4038"/>
<dbReference type="HOGENOM" id="CLU_018247_0_1_6"/>
<dbReference type="UniPathway" id="UPA00138"/>
<dbReference type="Proteomes" id="UP000001006">
    <property type="component" value="Chromosome"/>
</dbReference>
<dbReference type="Proteomes" id="UP000002673">
    <property type="component" value="Chromosome"/>
</dbReference>
<dbReference type="GO" id="GO:0005829">
    <property type="term" value="C:cytosol"/>
    <property type="evidence" value="ECO:0007669"/>
    <property type="project" value="TreeGrafter"/>
</dbReference>
<dbReference type="GO" id="GO:0005524">
    <property type="term" value="F:ATP binding"/>
    <property type="evidence" value="ECO:0007669"/>
    <property type="project" value="UniProtKB-UniRule"/>
</dbReference>
<dbReference type="GO" id="GO:0046872">
    <property type="term" value="F:metal ion binding"/>
    <property type="evidence" value="ECO:0007669"/>
    <property type="project" value="UniProtKB-KW"/>
</dbReference>
<dbReference type="GO" id="GO:0004612">
    <property type="term" value="F:phosphoenolpyruvate carboxykinase (ATP) activity"/>
    <property type="evidence" value="ECO:0007669"/>
    <property type="project" value="UniProtKB-UniRule"/>
</dbReference>
<dbReference type="GO" id="GO:0006094">
    <property type="term" value="P:gluconeogenesis"/>
    <property type="evidence" value="ECO:0007669"/>
    <property type="project" value="UniProtKB-UniRule"/>
</dbReference>
<dbReference type="CDD" id="cd00484">
    <property type="entry name" value="PEPCK_ATP"/>
    <property type="match status" value="1"/>
</dbReference>
<dbReference type="FunFam" id="2.170.8.10:FF:000001">
    <property type="entry name" value="Phosphoenolpyruvate carboxykinase (ATP)"/>
    <property type="match status" value="1"/>
</dbReference>
<dbReference type="FunFam" id="3.40.449.10:FF:000001">
    <property type="entry name" value="Phosphoenolpyruvate carboxykinase (ATP)"/>
    <property type="match status" value="1"/>
</dbReference>
<dbReference type="Gene3D" id="3.90.228.20">
    <property type="match status" value="1"/>
</dbReference>
<dbReference type="Gene3D" id="3.40.449.10">
    <property type="entry name" value="Phosphoenolpyruvate Carboxykinase, domain 1"/>
    <property type="match status" value="1"/>
</dbReference>
<dbReference type="Gene3D" id="2.170.8.10">
    <property type="entry name" value="Phosphoenolpyruvate Carboxykinase, domain 2"/>
    <property type="match status" value="1"/>
</dbReference>
<dbReference type="HAMAP" id="MF_00453">
    <property type="entry name" value="PEPCK_ATP"/>
    <property type="match status" value="1"/>
</dbReference>
<dbReference type="InterPro" id="IPR001272">
    <property type="entry name" value="PEP_carboxykinase_ATP"/>
</dbReference>
<dbReference type="InterPro" id="IPR013035">
    <property type="entry name" value="PEP_carboxykinase_C"/>
</dbReference>
<dbReference type="InterPro" id="IPR008210">
    <property type="entry name" value="PEP_carboxykinase_N"/>
</dbReference>
<dbReference type="InterPro" id="IPR015994">
    <property type="entry name" value="PEPCK_ATP_CS"/>
</dbReference>
<dbReference type="NCBIfam" id="TIGR00224">
    <property type="entry name" value="pckA"/>
    <property type="match status" value="1"/>
</dbReference>
<dbReference type="NCBIfam" id="NF006819">
    <property type="entry name" value="PRK09344.1-1"/>
    <property type="match status" value="1"/>
</dbReference>
<dbReference type="NCBIfam" id="NF006820">
    <property type="entry name" value="PRK09344.1-2"/>
    <property type="match status" value="1"/>
</dbReference>
<dbReference type="NCBIfam" id="NF006821">
    <property type="entry name" value="PRK09344.1-3"/>
    <property type="match status" value="1"/>
</dbReference>
<dbReference type="PANTHER" id="PTHR30031:SF0">
    <property type="entry name" value="PHOSPHOENOLPYRUVATE CARBOXYKINASE (ATP)"/>
    <property type="match status" value="1"/>
</dbReference>
<dbReference type="PANTHER" id="PTHR30031">
    <property type="entry name" value="PHOSPHOENOLPYRUVATE CARBOXYKINASE ATP"/>
    <property type="match status" value="1"/>
</dbReference>
<dbReference type="Pfam" id="PF01293">
    <property type="entry name" value="PEPCK_ATP"/>
    <property type="match status" value="1"/>
</dbReference>
<dbReference type="PIRSF" id="PIRSF006294">
    <property type="entry name" value="PEP_crbxkin"/>
    <property type="match status" value="1"/>
</dbReference>
<dbReference type="SUPFAM" id="SSF68923">
    <property type="entry name" value="PEP carboxykinase N-terminal domain"/>
    <property type="match status" value="1"/>
</dbReference>
<dbReference type="SUPFAM" id="SSF53795">
    <property type="entry name" value="PEP carboxykinase-like"/>
    <property type="match status" value="1"/>
</dbReference>
<dbReference type="PROSITE" id="PS00532">
    <property type="entry name" value="PEPCK_ATP"/>
    <property type="match status" value="1"/>
</dbReference>
<protein>
    <recommendedName>
        <fullName evidence="1">Phosphoenolpyruvate carboxykinase (ATP)</fullName>
        <shortName evidence="1">PCK</shortName>
        <shortName evidence="1">PEP carboxykinase</shortName>
        <shortName evidence="1">PEPCK</shortName>
        <ecNumber evidence="1">4.1.1.49</ecNumber>
    </recommendedName>
</protein>
<accession>Q83J96</accession>
<accession>Q7UAT0</accession>
<name>PCKA_SHIFL</name>
<feature type="chain" id="PRO_0000236944" description="Phosphoenolpyruvate carboxykinase (ATP)">
    <location>
        <begin position="1"/>
        <end position="540"/>
    </location>
</feature>
<feature type="binding site" evidence="1">
    <location>
        <position position="65"/>
    </location>
    <ligand>
        <name>substrate</name>
    </ligand>
</feature>
<feature type="binding site" evidence="1">
    <location>
        <position position="207"/>
    </location>
    <ligand>
        <name>substrate</name>
    </ligand>
</feature>
<feature type="binding site" evidence="1">
    <location>
        <position position="213"/>
    </location>
    <ligand>
        <name>ATP</name>
        <dbReference type="ChEBI" id="CHEBI:30616"/>
    </ligand>
</feature>
<feature type="binding site" evidence="1">
    <location>
        <position position="213"/>
    </location>
    <ligand>
        <name>Mn(2+)</name>
        <dbReference type="ChEBI" id="CHEBI:29035"/>
    </ligand>
</feature>
<feature type="binding site" evidence="1">
    <location>
        <position position="213"/>
    </location>
    <ligand>
        <name>substrate</name>
    </ligand>
</feature>
<feature type="binding site" evidence="1">
    <location>
        <position position="232"/>
    </location>
    <ligand>
        <name>ATP</name>
        <dbReference type="ChEBI" id="CHEBI:30616"/>
    </ligand>
</feature>
<feature type="binding site" evidence="1">
    <location>
        <position position="232"/>
    </location>
    <ligand>
        <name>Mn(2+)</name>
        <dbReference type="ChEBI" id="CHEBI:29035"/>
    </ligand>
</feature>
<feature type="binding site" evidence="1">
    <location>
        <begin position="248"/>
        <end position="256"/>
    </location>
    <ligand>
        <name>ATP</name>
        <dbReference type="ChEBI" id="CHEBI:30616"/>
    </ligand>
</feature>
<feature type="binding site" evidence="1">
    <location>
        <position position="269"/>
    </location>
    <ligand>
        <name>Mn(2+)</name>
        <dbReference type="ChEBI" id="CHEBI:29035"/>
    </ligand>
</feature>
<feature type="binding site" evidence="1">
    <location>
        <position position="297"/>
    </location>
    <ligand>
        <name>ATP</name>
        <dbReference type="ChEBI" id="CHEBI:30616"/>
    </ligand>
</feature>
<feature type="binding site" evidence="1">
    <location>
        <position position="333"/>
    </location>
    <ligand>
        <name>ATP</name>
        <dbReference type="ChEBI" id="CHEBI:30616"/>
    </ligand>
</feature>
<feature type="binding site" evidence="1">
    <location>
        <position position="333"/>
    </location>
    <ligand>
        <name>substrate</name>
    </ligand>
</feature>
<feature type="binding site" evidence="1">
    <location>
        <begin position="449"/>
        <end position="450"/>
    </location>
    <ligand>
        <name>ATP</name>
        <dbReference type="ChEBI" id="CHEBI:30616"/>
    </ligand>
</feature>
<feature type="binding site" evidence="1">
    <location>
        <position position="455"/>
    </location>
    <ligand>
        <name>ATP</name>
        <dbReference type="ChEBI" id="CHEBI:30616"/>
    </ligand>
</feature>
<feature type="modified residue" description="N6-acetyllysine" evidence="1">
    <location>
        <position position="87"/>
    </location>
</feature>
<feature type="modified residue" description="N6-acetyllysine" evidence="1">
    <location>
        <position position="523"/>
    </location>
</feature>
<feature type="sequence conflict" description="In Ref. 2; AAP19296." evidence="2" ref="2">
    <original>N</original>
    <variation>D</variation>
    <location>
        <position position="19"/>
    </location>
</feature>
<organism>
    <name type="scientific">Shigella flexneri</name>
    <dbReference type="NCBI Taxonomy" id="623"/>
    <lineage>
        <taxon>Bacteria</taxon>
        <taxon>Pseudomonadati</taxon>
        <taxon>Pseudomonadota</taxon>
        <taxon>Gammaproteobacteria</taxon>
        <taxon>Enterobacterales</taxon>
        <taxon>Enterobacteriaceae</taxon>
        <taxon>Shigella</taxon>
    </lineage>
</organism>
<reference key="1">
    <citation type="journal article" date="2002" name="Nucleic Acids Res.">
        <title>Genome sequence of Shigella flexneri 2a: insights into pathogenicity through comparison with genomes of Escherichia coli K12 and O157.</title>
        <authorList>
            <person name="Jin Q."/>
            <person name="Yuan Z."/>
            <person name="Xu J."/>
            <person name="Wang Y."/>
            <person name="Shen Y."/>
            <person name="Lu W."/>
            <person name="Wang J."/>
            <person name="Liu H."/>
            <person name="Yang J."/>
            <person name="Yang F."/>
            <person name="Zhang X."/>
            <person name="Zhang J."/>
            <person name="Yang G."/>
            <person name="Wu H."/>
            <person name="Qu D."/>
            <person name="Dong J."/>
            <person name="Sun L."/>
            <person name="Xue Y."/>
            <person name="Zhao A."/>
            <person name="Gao Y."/>
            <person name="Zhu J."/>
            <person name="Kan B."/>
            <person name="Ding K."/>
            <person name="Chen S."/>
            <person name="Cheng H."/>
            <person name="Yao Z."/>
            <person name="He B."/>
            <person name="Chen R."/>
            <person name="Ma D."/>
            <person name="Qiang B."/>
            <person name="Wen Y."/>
            <person name="Hou Y."/>
            <person name="Yu J."/>
        </authorList>
    </citation>
    <scope>NUCLEOTIDE SEQUENCE [LARGE SCALE GENOMIC DNA]</scope>
    <source>
        <strain>301 / Serotype 2a</strain>
    </source>
</reference>
<reference key="2">
    <citation type="journal article" date="2003" name="Infect. Immun.">
        <title>Complete genome sequence and comparative genomics of Shigella flexneri serotype 2a strain 2457T.</title>
        <authorList>
            <person name="Wei J."/>
            <person name="Goldberg M.B."/>
            <person name="Burland V."/>
            <person name="Venkatesan M.M."/>
            <person name="Deng W."/>
            <person name="Fournier G."/>
            <person name="Mayhew G.F."/>
            <person name="Plunkett G. III"/>
            <person name="Rose D.J."/>
            <person name="Darling A."/>
            <person name="Mau B."/>
            <person name="Perna N.T."/>
            <person name="Payne S.M."/>
            <person name="Runyen-Janecky L.J."/>
            <person name="Zhou S."/>
            <person name="Schwartz D.C."/>
            <person name="Blattner F.R."/>
        </authorList>
    </citation>
    <scope>NUCLEOTIDE SEQUENCE [LARGE SCALE GENOMIC DNA]</scope>
    <source>
        <strain>ATCC 700930 / 2457T / Serotype 2a</strain>
    </source>
</reference>